<name>RPOA_PRRSS</name>
<proteinExistence type="evidence at protein level"/>
<sequence>MSGTFSRCMCTPAARVFWNAGQVFCTRCLSARPLLSPELQDTDLGVVGLFYKPKDKIHWKVPIGIPQVECTPSGCCWLSAVFPLARMTSGNHNFLQRLVKVADVLYRDGCLAPRHLRELQVYERGCSWYPITGPVPGMGLFANSMHVSDQPFPGATHVLTNSPLPQRACRQPFCPFEEAHSDVYRWKKFVIFTDSSPNGRFRMMWTPESDDSAALEVLPPELERQVEILTRSFPAHHPINLADWELTESPENGFSFGTSHSCGHIVQNPNVFDGKCWLTCFLGQSAEVCYHEEHLANALGYQTKWGVHGKYLQRRLQVRGMRAVVDPDGPIHVEALSCSQSWVRHLTLNNDVTPGFVRLTSIRIVSNTEPTAFRIFRFGAHKWYGAAGKRARAKRATKSGKDSALAPKIAPPVPTCGITTYSPPTDGSCGWHVLAAIVNRMINGDFTSPLPQYNRPEDDWASDYDLAQAIQCLQLPATVVRNRACPNAKYLIKLNGVHWEVEVRSGMAPRSLSRECVVGVCSEGCVAPPYPADGLPKRALEALASAYRLPSDCVSSGIADFLADPPPQEFWTLDKMLTSPSPERSGFSSLYKLLLEVVPQKCGATEGAFVYAVERMLKDCPSPEQAMALLAKIKVPSSKAPSVSLDECFPAGVPADFEPAFQERPRSPGAAVALCSPDAKGFEGTASEEAQESGHKAVHAVPLAEGPNNEQVQVVAGEQLELGGCGLAIGSAQSSSDSKRENMHNSREDEPLDLSHPAPAATTTLVGEQTPDNPGSDASALPIAVRGFVPTGPILRHVEHCGTESGDSSSPLDLSFAQTLDQPLDLSLAAWPVKATASDPGWVRGRCEPVFLKPRKAFSDGDSALQFGELSESSSVIEFDQTKDTLVADAPVDLTTSNEALSAVDPSEFVELRRPRHSAQALIDRGGPLADVHAKIKNRVYEQCLQACEPGSRATPATREWLDKMWDRVDMKTWRCTSQFQAGRILASLKFLPDMIQDTPPPVPRKNRASDNAGLKQLVARWDKKLSVTPPPKSAGLVLDQTVPPPTDIQQEDATPSDGLSHASDFSSRVSTSWSWKGLMLSGTRLAGSAGQRLMTWVFEVYSHLPAFILTLFSPRGSMAPGDWLFAGVVLLALLLCRSYPILGCLPLLGVFSGSLRRVRLGVFGSWMAFAVFLFSTPSNPVGSSCDHDSPECHAELLALEQRQLWEPVRGLVVGPSGLLCVILGKLLGGSRHLWHVILRLCMLTDLALSLVYVVSQGRCHKCWGKCIRTAPAEVALNVFPFSRATRNSLTSLCDRFQTPKGVDPVHLATGWRGCWRGESPIHQPHQKPIAYANLDEKKISAQTVVAVPYDPSQAIKCLKVLQAGGAIVDQPTPEVVRVSEIPFSAPFFPKVPVNPDCRIVVDSDTFVAAVRCGYSTAQLVLGRGNFAKLNQTPLRDSASTKTTGGASYTLAVAQVSVWTLVHFILGLWFTSPQVCGRGTADPWCSNPFSYPAYGPGVVCSSRLCVSADGVTLPLFSAVAQLSGREVGIFILVLVSLTALAHRLALKADMLVVFSAFCAYAWPMSSWLICFFPILLKWVTLHPLTMLWVHSFLVFCMPAAGILSLGITGLLWAVGRFTQVAGIITPYDIHQYTSGPRGAAAVATAPEGTYMAAVRRAALTGRTLIFTPSAVGSLLEGAFRTHKPCLNTVNVVGSSLGSGGVFTIDGRKTVVTAAHVLNGDTARVTGDSYNRMHTFKTSGDYAWSHADDWQGVAPVVKVAKGYRGRAYWQTSTGVEPGVIGEGFAFCFTNCGDSGSPVISESGDLIGIHTGSNKLGSGLVTTPEGETCAIKETKLSDLSRHFAGPSVPLGDIKLSPAIVPDVTSIPSDLASLLASVPVMEGGLSTVQLLCVFFLLWRMMGHAWTPIVAVGFFLLNEILPAVLVRAVFSFALFILAWATPWSAQVLMIRLLTASLNRNKLSLAFYALGGVVGLAAEIGAFAGRLPELSQALSTYCFLPRVLAMASYVPIIIIGGLHALGVILWLFKYRCLHNMLVGDGSFSSAFFLRYFAEGNLRKGVSQSCGMSNESLTAALACKLSQADLDFLSSLTNFKCFVSASNMKNAAGQYIEAAYAKALRQELASLVQVDKMKGILSKLEAFAETATPSLDAGDVVVLLGQHPHGSILDINVGTERKTVSVQETRSLGGSKFSVCTVVSNTPVDALTGIPLQTPTPLFENGPRHRGEEDDLRVERMKKHCVSLGFHNINGKVYCKIWDKSTGDTFYTDDSRYTQDLAFQDRSADYRDRDYEGVQTAPQQGFDPKSETPIGTVVIGGITYNRYLIKGKEVLVPKPDNCLEAAKLSLEQALAGMGQTCDLTAAEVEKLRRIISQLQGLTTEQALNCLLAASGLTRCGRGGLVVTETAVKIVKYHSRTFTLGPLDLKVTSEAEVKKSTEQGHAVVANLCSGVILMRPHPPSLVDVLLKPGLDTKPGIQPGHGAGNMGVDGSTWDFETAPTKAELELSKQIIQACEVRRGDAPNLQLPYKLYPVRGDPERHGGRLINTRFGDLSYKTPQDTKSAIHAACCLHPNGAPVSDGKSTLGTTLQHGFELYVPTVPYSVMEYLDSRPDTPFMCTKHGTSKAAAEDLQKYDLSTQGFVLPGVLRLVRRFIFGHIGKAPPLFLPSTYPAKNSMAGINGQRFPTKDVQSIPEIDEMCARAVKENWQTVTPCTLKKQYCSKPKTRTILGTNNFIALAHRSALSGVTQAFMKKAWKSPIALGKNKFKELHCTVAGRCLEADLASCDRSTPAIVRWFVANLLYELAGCEEYLPSYVLNCCHDLVATQDGAFTKRGGLSSGDPVTSVSNTVYSLIIYAQHMVLSALKMGHEIGLKFLEEQLKFEDLLEIQPMLVYSDDLVLYAERPTFPNYHWWVEHLDLMLGFRTDPKKTVITDKPSFLGCRIEAGRQLVPNRDRILAALAYHMKAQNASEYYASAAAILMDSCACIDHDPEWYEDLICGIARCARQDGYSFPGPAFFMSMWEKLRSHNEGKKFRHCGICDAKADHASACGLDLCLFHSHFHQHCPVTLSCGHHAGSRECSQCQSPVGAGRSPLDAVLKQIPYKPPRTVIMKVGNKTTALDPGRYQSRRGLVAVKRGIAGNEVDLPDGDYQVVPLLPTCKDINMVKVACNVLLSKFIVGPPGSGKTTWLLSQVQDDDVIYTPTHQTMFDIVSALKVCRYSIPGASGLPFPPPARSGPWVRLVASGHVPGRTSYLDEAGYCNHLDILRLLSKTPLVCLGDLQQLHPVGFDSYCYVFDQMPQKQLTTIYRFGPNICAAIQPCYREKLESKARNTRVVFTTWPVAFGQVLTPYHKDRIGSAITIDSSQGATFDIVTLHLPSPKSLNKSRALVAITRARHGLFIYDPHNQLQEFFNLIPERTDCNLVFSRGDDLVVLSADNAVTTVAKALGTGPSRFRVSDPRCKSLLAACSASLEGSCMPLPQVAHNLGFYFSPDSPAFAPLPKELAPHWPVVTHQNNRAWPDRLVASMRPIDARYSKPMVGAGYVVGPSTFLGTPGVVSYYLTLYIRGEPQALPETLVSTGRIATDCREYLDAAEEEAAKELPHAFIGDVKGTTVGGCHHITSKYLPRTLPKDSVAVVGVSSPGRAAKAMCTLTDVYLPELRPYLQPETASKCWKLKLDFRDVRLMVWKGATAYFQLEGLTWSALPDYARFIQLPKDAVVYIDPCIGPATANRKVVRTTDWRADLAVTPYDYGAQNILTTAWFEDLGPQWKILGLQPFRRAFGFENTEDWAILARRMSDGKDYTDYNWDCVRERPHAIYGRARDHTYHFAPGTELQVELGKPRLPPGREP</sequence>
<feature type="chain" id="PRO_0000397084" description="Replicase polyprotein 1ab" evidence="1">
    <location>
        <begin position="1"/>
        <end position="3838"/>
    </location>
</feature>
<feature type="chain" id="PRO_0000410830" description="Nsp1">
    <location>
        <begin position="1"/>
        <end position="385"/>
    </location>
</feature>
<feature type="chain" id="PRO_0000397085" description="Nsp1-alpha papain-like cysteine proteinase" evidence="7">
    <location>
        <begin position="1"/>
        <end position="180"/>
    </location>
</feature>
<feature type="chain" id="PRO_0000397086" description="Nsp1-beta papain-like cysteine proteinase" evidence="7">
    <location>
        <begin position="181"/>
        <end position="385"/>
    </location>
</feature>
<feature type="chain" id="PRO_0000397087" description="Nsp2 cysteine proteinase">
    <location>
        <begin position="386"/>
        <end position="1446"/>
    </location>
</feature>
<feature type="chain" id="PRO_0000397088" description="Non-structural protein 3">
    <location>
        <begin position="1447"/>
        <end position="1676"/>
    </location>
</feature>
<feature type="chain" id="PRO_0000397089" description="Serine protease nsp4">
    <location>
        <begin position="1677"/>
        <end position="1879"/>
    </location>
</feature>
<feature type="chain" id="PRO_0000397090" description="Non-structural protein 5-6-7" evidence="1">
    <location>
        <begin position="1880"/>
        <end position="2334"/>
    </location>
</feature>
<feature type="chain" id="PRO_0000423134" description="Non-structural protein 5">
    <location>
        <begin position="1880"/>
        <end position="2049"/>
    </location>
</feature>
<feature type="chain" id="PRO_0000423135" description="Non-structural protein 6">
    <location>
        <begin position="2050"/>
        <end position="2065"/>
    </location>
</feature>
<feature type="chain" id="PRO_0000423136" description="Non-structural protein 7-alpha">
    <location>
        <begin position="2066"/>
        <end position="2214"/>
    </location>
</feature>
<feature type="chain" id="PRO_0000423137" description="Non-structural protein 7-beta">
    <location>
        <begin position="2215"/>
        <end position="2334"/>
    </location>
</feature>
<feature type="chain" id="PRO_0000397091" description="RNA-directed RNA polymerase" evidence="1">
    <location>
        <begin position="2335"/>
        <end position="3020"/>
    </location>
</feature>
<feature type="chain" id="PRO_0000397092" description="Non-structural protein 8" evidence="1">
    <location>
        <begin position="2335"/>
        <end position="2379"/>
    </location>
</feature>
<feature type="chain" id="PRO_0000397093" description="Helicase nsp10" evidence="1">
    <location>
        <begin position="3021"/>
        <end position="3462"/>
    </location>
</feature>
<feature type="chain" id="PRO_0000397094" description="Uridylate-specific endoribonuclease nsp11" evidence="1">
    <location>
        <begin position="3463"/>
        <end position="3686"/>
    </location>
</feature>
<feature type="chain" id="PRO_0000397095" description="Non-structural protein 12" evidence="1">
    <location>
        <begin position="3687"/>
        <end position="3838"/>
    </location>
</feature>
<feature type="transmembrane region" description="Helical" evidence="7">
    <location>
        <begin position="1094"/>
        <end position="1114"/>
    </location>
</feature>
<feature type="transmembrane region" description="Helical" evidence="7">
    <location>
        <begin position="1117"/>
        <end position="1137"/>
    </location>
</feature>
<feature type="transmembrane region" description="Helical" evidence="7">
    <location>
        <begin position="1162"/>
        <end position="1182"/>
    </location>
</feature>
<feature type="transmembrane region" description="Helical" evidence="7">
    <location>
        <begin position="1211"/>
        <end position="1231"/>
    </location>
</feature>
<feature type="transmembrane region" description="Helical" evidence="7">
    <location>
        <begin position="1235"/>
        <end position="1255"/>
    </location>
</feature>
<feature type="transmembrane region" description="Helical" evidence="7">
    <location>
        <begin position="1450"/>
        <end position="1470"/>
    </location>
</feature>
<feature type="transmembrane region" description="Helical" evidence="7">
    <location>
        <begin position="1526"/>
        <end position="1546"/>
    </location>
</feature>
<feature type="transmembrane region" description="Helical" evidence="7">
    <location>
        <begin position="1556"/>
        <end position="1576"/>
    </location>
</feature>
<feature type="transmembrane region" description="Helical" evidence="7">
    <location>
        <begin position="1592"/>
        <end position="1612"/>
    </location>
</feature>
<feature type="transmembrane region" description="Helical" evidence="7">
    <location>
        <begin position="1875"/>
        <end position="1895"/>
    </location>
</feature>
<feature type="transmembrane region" description="Helical" evidence="7">
    <location>
        <begin position="1916"/>
        <end position="1936"/>
    </location>
</feature>
<feature type="transmembrane region" description="Helical" evidence="7">
    <location>
        <begin position="1960"/>
        <end position="1980"/>
    </location>
</feature>
<feature type="transmembrane region" description="Helical" evidence="7">
    <location>
        <begin position="2003"/>
        <end position="2023"/>
    </location>
</feature>
<feature type="transmembrane region" description="Helical" evidence="7">
    <location>
        <begin position="2029"/>
        <end position="2048"/>
    </location>
</feature>
<feature type="domain" description="Peptidase C31" evidence="11">
    <location>
        <begin position="69"/>
        <end position="180"/>
    </location>
</feature>
<feature type="domain" description="Peptidase C32" evidence="12">
    <location>
        <begin position="269"/>
        <end position="385"/>
    </location>
</feature>
<feature type="domain" description="Peptidase C33" evidence="10">
    <location>
        <begin position="420"/>
        <end position="527"/>
    </location>
</feature>
<feature type="domain" description="Peptidase S32" evidence="9">
    <location>
        <begin position="1677"/>
        <end position="1879"/>
    </location>
</feature>
<feature type="domain" description="NiRAN" evidence="14">
    <location>
        <begin position="2364"/>
        <end position="2527"/>
    </location>
</feature>
<feature type="domain" description="RdRp catalytic" evidence="8">
    <location>
        <begin position="2765"/>
        <end position="2899"/>
    </location>
</feature>
<feature type="domain" description="AV ZBD" evidence="13">
    <location>
        <begin position="3021"/>
        <end position="3084"/>
    </location>
</feature>
<feature type="domain" description="(+)RNA virus helicase ATP-binding">
    <location>
        <begin position="3134"/>
        <end position="3293"/>
    </location>
</feature>
<feature type="domain" description="(+)RNA virus helicase C-terminal">
    <location>
        <begin position="3294"/>
        <end position="3423"/>
    </location>
</feature>
<feature type="domain" description="AV-Nsp11N/CoV-Nsp15M" evidence="16">
    <location>
        <begin position="3462"/>
        <end position="3559"/>
    </location>
</feature>
<feature type="domain" description="NendoU" evidence="15">
    <location>
        <begin position="3561"/>
        <end position="3683"/>
    </location>
</feature>
<feature type="zinc finger region" description="C4-type; atypical">
    <location>
        <begin position="8"/>
        <end position="28"/>
    </location>
</feature>
<feature type="region of interest" description="PCP1-alpha" evidence="1">
    <location>
        <begin position="69"/>
        <end position="182"/>
    </location>
</feature>
<feature type="region of interest" description="Important for host EIF2AK2 inhibition" evidence="2">
    <location>
        <begin position="203"/>
        <end position="204"/>
    </location>
</feature>
<feature type="region of interest" description="PCP1-beta" evidence="1">
    <location>
        <begin position="269"/>
        <end position="384"/>
    </location>
</feature>
<feature type="region of interest" description="OTU-like">
    <location>
        <begin position="418"/>
        <end position="505"/>
    </location>
</feature>
<feature type="region of interest" description="Disordered" evidence="17">
    <location>
        <begin position="728"/>
        <end position="758"/>
    </location>
</feature>
<feature type="region of interest" description="Disordered" evidence="17">
    <location>
        <begin position="1027"/>
        <end position="1064"/>
    </location>
</feature>
<feature type="region of interest" description="HD1" evidence="1">
    <location>
        <begin position="1132"/>
        <end position="1255"/>
    </location>
</feature>
<feature type="region of interest" description="WCCH" evidence="1">
    <location>
        <begin position="1310"/>
        <end position="1334"/>
    </location>
</feature>
<feature type="region of interest" description="HD2" evidence="1">
    <location>
        <begin position="1451"/>
        <end position="1612"/>
    </location>
</feature>
<feature type="region of interest" description="HD3" evidence="1">
    <location>
        <begin position="1902"/>
        <end position="2023"/>
    </location>
</feature>
<feature type="compositionally biased region" description="Basic and acidic residues" evidence="17">
    <location>
        <begin position="737"/>
        <end position="749"/>
    </location>
</feature>
<feature type="active site" description="For Nsp1-alpha papain-like cysteine proteinase activity" evidence="11">
    <location>
        <position position="76"/>
    </location>
</feature>
<feature type="active site" description="For Nsp1-alpha papain-like cysteine proteinase activity" evidence="11">
    <location>
        <position position="146"/>
    </location>
</feature>
<feature type="active site" description="For Nsp1-beta papain-like cysteine proteinase activity" evidence="12">
    <location>
        <position position="276"/>
    </location>
</feature>
<feature type="active site" description="For Nsp1-beta papain-like cysteine proteinase activity" evidence="12">
    <location>
        <position position="345"/>
    </location>
</feature>
<feature type="active site" description="For Nsp2 cysteine proteinase activity" evidence="10">
    <location>
        <position position="429"/>
    </location>
</feature>
<feature type="active site" description="For Nsp2 cysteine proteinase activity" evidence="10">
    <location>
        <position position="498"/>
    </location>
</feature>
<feature type="active site" description="Charge relay system; for 3C-like serine proteinase activity" evidence="9">
    <location>
        <position position="1715"/>
    </location>
</feature>
<feature type="active site" description="Charge relay system; for 3C-like serine proteinase activity" evidence="9">
    <location>
        <position position="1740"/>
    </location>
</feature>
<feature type="active site" description="Charge relay system; for 3C-like serine proteinase activity" evidence="9">
    <location>
        <position position="1793"/>
    </location>
</feature>
<feature type="active site" evidence="15">
    <location>
        <position position="3592"/>
    </location>
</feature>
<feature type="active site" evidence="15">
    <location>
        <position position="3607"/>
    </location>
</feature>
<feature type="active site" evidence="15">
    <location>
        <position position="3636"/>
    </location>
</feature>
<feature type="binding site" evidence="13">
    <location>
        <position position="3027"/>
    </location>
    <ligand>
        <name>Zn(2+)</name>
        <dbReference type="ChEBI" id="CHEBI:29105"/>
        <label>1</label>
    </ligand>
</feature>
<feature type="binding site" evidence="13">
    <location>
        <position position="3030"/>
    </location>
    <ligand>
        <name>Zn(2+)</name>
        <dbReference type="ChEBI" id="CHEBI:29105"/>
        <label>1</label>
    </ligand>
</feature>
<feature type="binding site" evidence="13">
    <location>
        <position position="3040"/>
    </location>
    <ligand>
        <name>Zn(2+)</name>
        <dbReference type="ChEBI" id="CHEBI:29105"/>
        <label>2</label>
    </ligand>
</feature>
<feature type="binding site" evidence="13">
    <location>
        <position position="3045"/>
    </location>
    <ligand>
        <name>Zn(2+)</name>
        <dbReference type="ChEBI" id="CHEBI:29105"/>
        <label>1</label>
    </ligand>
</feature>
<feature type="binding site" evidence="13">
    <location>
        <position position="3048"/>
    </location>
    <ligand>
        <name>Zn(2+)</name>
        <dbReference type="ChEBI" id="CHEBI:29105"/>
        <label>1</label>
    </ligand>
</feature>
<feature type="binding site" evidence="13">
    <location>
        <position position="3050"/>
    </location>
    <ligand>
        <name>Zn(2+)</name>
        <dbReference type="ChEBI" id="CHEBI:29105"/>
        <label>2</label>
    </ligand>
</feature>
<feature type="binding site" evidence="13">
    <location>
        <position position="3052"/>
    </location>
    <ligand>
        <name>Zn(2+)</name>
        <dbReference type="ChEBI" id="CHEBI:29105"/>
        <label>2</label>
    </ligand>
</feature>
<feature type="binding site" evidence="13">
    <location>
        <position position="3054"/>
    </location>
    <ligand>
        <name>Zn(2+)</name>
        <dbReference type="ChEBI" id="CHEBI:29105"/>
        <label>2</label>
    </ligand>
</feature>
<feature type="binding site" evidence="13">
    <location>
        <position position="3061"/>
    </location>
    <ligand>
        <name>Zn(2+)</name>
        <dbReference type="ChEBI" id="CHEBI:29105"/>
        <label>3</label>
    </ligand>
</feature>
<feature type="binding site" evidence="13">
    <location>
        <position position="3063"/>
    </location>
    <ligand>
        <name>Zn(2+)</name>
        <dbReference type="ChEBI" id="CHEBI:29105"/>
        <label>3</label>
    </ligand>
</feature>
<feature type="binding site" evidence="13">
    <location>
        <position position="3070"/>
    </location>
    <ligand>
        <name>Zn(2+)</name>
        <dbReference type="ChEBI" id="CHEBI:29105"/>
        <label>3</label>
    </ligand>
</feature>
<feature type="binding site" evidence="13">
    <location>
        <position position="3073"/>
    </location>
    <ligand>
        <name>Zn(2+)</name>
        <dbReference type="ChEBI" id="CHEBI:29105"/>
        <label>3</label>
    </ligand>
</feature>
<feature type="binding site" evidence="1">
    <location>
        <begin position="3168"/>
        <end position="3175"/>
    </location>
    <ligand>
        <name>ATP</name>
        <dbReference type="ChEBI" id="CHEBI:30616"/>
    </ligand>
</feature>
<feature type="site" description="Cleavage; by autolysis" evidence="6">
    <location>
        <begin position="180"/>
        <end position="181"/>
    </location>
</feature>
<feature type="site" description="Cleavage; by autolysis" evidence="6">
    <location>
        <begin position="385"/>
        <end position="386"/>
    </location>
</feature>
<feature type="site" description="Cleavage; by CP2" evidence="22">
    <location>
        <begin position="1446"/>
        <end position="1447"/>
    </location>
</feature>
<feature type="site" description="Cleavage; by 3CLSP" evidence="20">
    <location>
        <begin position="1676"/>
        <end position="1677"/>
    </location>
</feature>
<feature type="site" description="Cleavage; by 3CLSP" evidence="20">
    <location>
        <begin position="1879"/>
        <end position="1880"/>
    </location>
</feature>
<feature type="site" description="Cleavage; by 3CLSP" evidence="20">
    <location>
        <begin position="2049"/>
        <end position="2050"/>
    </location>
</feature>
<feature type="site" description="Cleavage; by 3CLSP" evidence="20">
    <location>
        <begin position="2065"/>
        <end position="2066"/>
    </location>
</feature>
<feature type="site" description="Cleavage; by 3CLSP" evidence="20">
    <location>
        <begin position="2214"/>
        <end position="2215"/>
    </location>
</feature>
<feature type="site" description="Cleavage; by 3CLSP" evidence="20">
    <location>
        <begin position="2334"/>
        <end position="2335"/>
    </location>
</feature>
<feature type="site" description="Cleavage; by 3CLSP" evidence="20">
    <location>
        <begin position="2379"/>
        <end position="2380"/>
    </location>
</feature>
<feature type="site" description="Cleavage; by 3CLSP">
    <location>
        <begin position="3020"/>
        <end position="3021"/>
    </location>
</feature>
<feature type="site" description="Involved in mRNA transcription process" evidence="1">
    <location>
        <position position="3071"/>
    </location>
</feature>
<feature type="site" description="Cleavage; by 3CLSP" evidence="1">
    <location>
        <begin position="3462"/>
        <end position="3463"/>
    </location>
</feature>
<feature type="site" description="Cleavage; by 3CLSP" evidence="1">
    <location>
        <begin position="3686"/>
        <end position="3687"/>
    </location>
</feature>
<feature type="splice variant" id="VSP_039634" description="In isoform Replicase polyprotein 1a." evidence="23">
    <location>
        <begin position="2380"/>
        <end position="3838"/>
    </location>
</feature>
<feature type="sequence variant" description="In strain: Infectious clone SD 01-08.">
    <original>R</original>
    <variation>Q</variation>
    <location>
        <position position="666"/>
    </location>
</feature>
<feature type="sequence variant" description="In strain: Infectious clone SD 01-08.">
    <original>R</original>
    <variation>K</variation>
    <location>
        <position position="1005"/>
    </location>
</feature>
<feature type="sequence variant" description="In strain: Infectious clone SD 01-08.">
    <original>N</original>
    <variation>S</variation>
    <location>
        <position position="1012"/>
    </location>
</feature>
<feature type="sequence variant" description="In strain: Infectious clone SD 01-08.">
    <original>P</original>
    <variation>L</variation>
    <location>
        <position position="3092"/>
    </location>
</feature>
<feature type="sequence variant" description="In strain: Infectious clone SD 01-08.">
    <original>Y</original>
    <variation>H</variation>
    <location>
        <position position="3682"/>
    </location>
</feature>
<feature type="mutagenesis site" description="Lethal." evidence="18">
    <original>C</original>
    <variation>A</variation>
    <location>
        <position position="429"/>
    </location>
</feature>
<feature type="mutagenesis site" description="Slight reduction in the ability of Nsp2 to impair NF-kappaB activation." evidence="18">
    <original>D</original>
    <variation>A</variation>
    <location>
        <position position="458"/>
    </location>
</feature>
<feature type="mutagenesis site" description="Reduction in the ability of Nsp2 to impair NF-kappaB activation." evidence="18">
    <original>S</original>
    <variation>A</variation>
    <location>
        <position position="462"/>
    </location>
</feature>
<feature type="mutagenesis site" description="Lethal." evidence="18">
    <original>D</original>
    <variation>A</variation>
    <location>
        <position position="463"/>
    </location>
</feature>
<feature type="mutagenesis site" description="Reduction in the ability of Nsp2 to impair NF-kappaB activation." evidence="18">
    <original>D</original>
    <variation>A</variation>
    <location>
        <position position="465"/>
    </location>
</feature>
<feature type="mutagenesis site" description="Lethal." evidence="18">
    <original>H</original>
    <variation>A</variation>
    <location>
        <position position="498"/>
    </location>
</feature>
<accession>A0MD28</accession>
<accession>A0MD29</accession>
<accession>Q6U9W7</accession>
<accession>Q6U9W8</accession>
<organismHost>
    <name type="scientific">Sus scrofa</name>
    <name type="common">Pig</name>
    <dbReference type="NCBI Taxonomy" id="9823"/>
</organismHost>
<protein>
    <recommendedName>
        <fullName>Replicase polyprotein 1ab</fullName>
    </recommendedName>
    <alternativeName>
        <fullName>ORF1ab polyprotein</fullName>
    </alternativeName>
    <component>
        <recommendedName>
            <fullName>Nsp1</fullName>
            <ecNumber>3.4.22.-</ecNumber>
        </recommendedName>
    </component>
    <component>
        <recommendedName>
            <fullName>Nsp1-alpha papain-like cysteine proteinase</fullName>
            <ecNumber>3.4.22.-</ecNumber>
        </recommendedName>
        <alternativeName>
            <fullName>PCP1-alpha</fullName>
        </alternativeName>
    </component>
    <component>
        <recommendedName>
            <fullName>Nsp1-beta papain-like cysteine proteinase</fullName>
            <ecNumber>3.4.22.-</ecNumber>
        </recommendedName>
        <alternativeName>
            <fullName>PCP1-beta</fullName>
        </alternativeName>
    </component>
    <component>
        <recommendedName>
            <fullName>Nsp2 cysteine proteinase</fullName>
            <ecNumber>3.4.19.12</ecNumber>
            <ecNumber>3.4.22.-</ecNumber>
        </recommendedName>
        <alternativeName>
            <fullName>CP2</fullName>
            <shortName>CP</shortName>
        </alternativeName>
    </component>
    <component>
        <recommendedName>
            <fullName>Non-structural protein 3</fullName>
            <shortName>Nsp3</shortName>
        </recommendedName>
    </component>
    <component>
        <recommendedName>
            <fullName>Serine protease nsp4</fullName>
            <shortName>3CLSP</shortName>
            <ecNumber>3.4.21.-</ecNumber>
        </recommendedName>
        <alternativeName>
            <fullName>3C-like serine proteinase</fullName>
        </alternativeName>
        <alternativeName>
            <fullName>Nsp4</fullName>
        </alternativeName>
    </component>
    <component>
        <recommendedName>
            <fullName>Non-structural protein 5-6-7</fullName>
            <shortName>Nsp5-6-7</shortName>
        </recommendedName>
    </component>
    <component>
        <recommendedName>
            <fullName>Non-structural protein 5</fullName>
            <shortName>Nsp5</shortName>
        </recommendedName>
    </component>
    <component>
        <recommendedName>
            <fullName>Non-structural protein 6</fullName>
            <shortName>Nsp6</shortName>
        </recommendedName>
    </component>
    <component>
        <recommendedName>
            <fullName>Non-structural protein 7-alpha</fullName>
            <shortName>Nsp7-alpha</shortName>
        </recommendedName>
    </component>
    <component>
        <recommendedName>
            <fullName>Non-structural protein 7-beta</fullName>
            <shortName>Nsp7-beta</shortName>
        </recommendedName>
    </component>
    <component>
        <recommendedName>
            <fullName>Non-structural protein 8</fullName>
            <shortName>Nsp8</shortName>
        </recommendedName>
    </component>
    <component>
        <recommendedName>
            <fullName>RNA-directed RNA polymerase</fullName>
            <shortName>Pol</shortName>
            <shortName>RdRp</shortName>
            <ecNumber>2.7.7.48</ecNumber>
        </recommendedName>
        <alternativeName>
            <fullName>Nsp9</fullName>
        </alternativeName>
    </component>
    <component>
        <recommendedName>
            <fullName>Helicase nsp10</fullName>
            <shortName>Hel</shortName>
            <ecNumber>3.6.4.12</ecNumber>
            <ecNumber>3.6.4.13</ecNumber>
        </recommendedName>
        <alternativeName>
            <fullName>Nsp10</fullName>
        </alternativeName>
    </component>
    <component>
        <recommendedName>
            <fullName>Uridylate-specific endoribonuclease nsp11</fullName>
            <ecNumber>4.6.1.-</ecNumber>
        </recommendedName>
        <alternativeName>
            <fullName>Non-structural protein 11</fullName>
            <shortName>Nsp11</shortName>
        </alternativeName>
    </component>
    <component>
        <recommendedName>
            <fullName>Non-structural protein 12</fullName>
            <shortName>Nsp12</shortName>
        </recommendedName>
    </component>
</protein>
<keyword id="KW-0067">ATP-binding</keyword>
<keyword id="KW-0255">Endonuclease</keyword>
<keyword id="KW-0347">Helicase</keyword>
<keyword id="KW-1035">Host cytoplasm</keyword>
<keyword id="KW-1038">Host endoplasmic reticulum</keyword>
<keyword id="KW-1043">Host membrane</keyword>
<keyword id="KW-1048">Host nucleus</keyword>
<keyword id="KW-0945">Host-virus interaction</keyword>
<keyword id="KW-0378">Hydrolase</keyword>
<keyword id="KW-1090">Inhibition of host innate immune response by virus</keyword>
<keyword id="KW-1114">Inhibition of host interferon signaling pathway by virus</keyword>
<keyword id="KW-1095">Inhibition of host ISG15 by virus</keyword>
<keyword id="KW-1100">Inhibition of host NF-kappa-B by virus</keyword>
<keyword id="KW-1102">Inhibition of host PKR by virus</keyword>
<keyword id="KW-1105">Inhibition of host STAT1 by virus</keyword>
<keyword id="KW-0922">Interferon antiviral system evasion</keyword>
<keyword id="KW-0456">Lyase</keyword>
<keyword id="KW-0472">Membrane</keyword>
<keyword id="KW-0479">Metal-binding</keyword>
<keyword id="KW-1127">Modulation of host ubiquitin pathway by viral deubiquitinase</keyword>
<keyword id="KW-1130">Modulation of host ubiquitin pathway by virus</keyword>
<keyword id="KW-0511">Multifunctional enzyme</keyword>
<keyword id="KW-0540">Nuclease</keyword>
<keyword id="KW-0547">Nucleotide-binding</keyword>
<keyword id="KW-0548">Nucleotidyltransferase</keyword>
<keyword id="KW-0645">Protease</keyword>
<keyword id="KW-0688">Ribosomal frameshifting</keyword>
<keyword id="KW-0696">RNA-directed RNA polymerase</keyword>
<keyword id="KW-0720">Serine protease</keyword>
<keyword id="KW-0788">Thiol protease</keyword>
<keyword id="KW-0808">Transferase</keyword>
<keyword id="KW-0812">Transmembrane</keyword>
<keyword id="KW-1133">Transmembrane helix</keyword>
<keyword id="KW-0899">Viral immunoevasion</keyword>
<keyword id="KW-0693">Viral RNA replication</keyword>
<keyword id="KW-0862">Zinc</keyword>
<keyword id="KW-0863">Zinc-finger</keyword>
<comment type="function">
    <molecule>Replicase polyprotein 1ab</molecule>
    <text>Contains the activities necessary for the transcription of negative stranded RNA, leader RNA, subgenomic mRNAs and progeny virion RNA as well as proteinases responsible for the cleavage of the polyprotein into functional products.</text>
</comment>
<comment type="function">
    <molecule>Nsp1-alpha papain-like cysteine proteinase</molecule>
    <text evidence="5">Inhibits host IFN-beta production. Plays a role in the degradation of the host transcriptional activator CREBBP protein. The degradation of host CREBBP which is a key component of the IFN enhanceosome is likely responsible for the inhibition of interferon mediated by Nsp1-alpha. Also participates in the inhibition of host NF-kappa-B activation by counteracting LUBAC-dependent induction of NF-kappa-B. Reduces host NEMO ubiquitination by blocking the interaction between the two LUBAC complex components RNF31 and SHARPIN.</text>
</comment>
<comment type="function">
    <molecule>Nsp1-beta papain-like cysteine proteinase</molecule>
    <text evidence="2 5 6">Plays a role in blocking host mRNA nuclear export to the cytoplasm and subversion of host protein synthesis (By similarity). Additionally, inhibits the interferon-activated JAK/STAT signal transduction by mediating the ubiquitination and subsequent proteasomal degradation of host KPNA1 (By similarity). Repurposes the host antiviral stress granules into a proviral platform to counteract the EIF2AK2/PKR restriction, thereby regulating the host inflammatory response (By similarity).</text>
</comment>
<comment type="function">
    <molecule>Nsp2 cysteine proteinase</molecule>
    <text evidence="18 19">Multifunctional protein that acts as a viral protease and as a viral antagonist of host immune response (PubMed:20504922, PubMed:22258253). Cleaves the nsp2/nsp3 site in the viral polyprotein. Displays deubiquitinating activity that cleaves both ubiquitinated and ISGylated products and therefore inhibits ubiquitin and ISG15-dependent host innate immunity (PubMed:20504922, PubMed:22258253). Also deubiquinates host NFKBIA, thereby interfering with NFKBIA degradation and impairing subsequent NF-kappa-B activation (PubMed:20504922).</text>
</comment>
<comment type="function">
    <molecule>Non-structural protein 3</molecule>
    <text evidence="5">Plays a role in the inhibition of the immune response by interacting with host IFITM1. This interaction leads to the proteasomal degradation of the IFN-induced antiviral protein IFITM1.</text>
</comment>
<comment type="function">
    <molecule>Serine protease nsp4</molecule>
    <text evidence="5">Cleaves the majority of cleavage sites present in the C-terminus of the polyprotein. Triggers host apoptosis through caspase-3, -8, and -9 activations. Subverts host innate immune responses through its protease activity. Targets the NF-kappa-B essential modulator NEMO and mediates its cleavage. Blocks host interferon beta induction and downstream signaling by cleaving mitochondrial MAVS, dislodging it from the mitochondria. Impairs host defense by cleaving host mRNA-decapping enzyme DCP1A to attenuate its antiviral activity.</text>
</comment>
<comment type="function">
    <molecule>Non-structural protein 5-6-7</molecule>
    <text evidence="5">Plays a role in the initial induction of autophagosomes from host endoplasmic reticulum.</text>
</comment>
<comment type="function">
    <molecule>Non-structural protein 5</molecule>
    <text evidence="5">Plays a role in the inhibition of host STAT3 signaling pathway by inducing the degradation of STAT3.</text>
</comment>
<comment type="function">
    <molecule>RNA-directed RNA polymerase</molecule>
    <text evidence="5">Responsible for replication and transcription of the viral RNA genome.</text>
</comment>
<comment type="function">
    <molecule>Helicase nsp10</molecule>
    <text evidence="5">Displays RNA and DNA duplex-unwinding activities with 5' to 3' polarity.</text>
</comment>
<comment type="function">
    <molecule>Uridylate-specific endoribonuclease nsp11</molecule>
    <text evidence="3 4 5">Plays a role in viral transcription/replication and prevents the simultaneous activation of host cell dsRNA sensors, such as MDA5/IFIH1, OAS, PKR (By similarity) and NLRP3 inflammasome (By similarity). Acts by degrading the 5'-polyuridines generated during replication of the poly(A) region of viral genomic and subgenomic RNAs. Catalyzes a two-step reaction in which a 2'3'-cyclic phosphate (2'3'-cP) is first generated by 2'-O transesterification, which is then hydrolyzed to a 3'-phosphate (3'-P) (By similarity). If not degraded, poly(U) RNA would hybridize with poly(A) RNA tails and activate host dsRNA sensors (By similarity). Also plays a role in the inhibition of host type I interferon production by recruiting host OTULIN to promote removal of linear ubiquitination targeting host NEMO (By similarity).</text>
</comment>
<comment type="catalytic activity">
    <molecule>RNA-directed RNA polymerase</molecule>
    <reaction evidence="8">
        <text>RNA(n) + a ribonucleoside 5'-triphosphate = RNA(n+1) + diphosphate</text>
        <dbReference type="Rhea" id="RHEA:21248"/>
        <dbReference type="Rhea" id="RHEA-COMP:14527"/>
        <dbReference type="Rhea" id="RHEA-COMP:17342"/>
        <dbReference type="ChEBI" id="CHEBI:33019"/>
        <dbReference type="ChEBI" id="CHEBI:61557"/>
        <dbReference type="ChEBI" id="CHEBI:140395"/>
        <dbReference type="EC" id="2.7.7.48"/>
    </reaction>
</comment>
<comment type="catalytic activity">
    <molecule>Helicase nsp10</molecule>
    <reaction evidence="5">
        <text>ATP + H2O = ADP + phosphate + H(+)</text>
        <dbReference type="Rhea" id="RHEA:13065"/>
        <dbReference type="ChEBI" id="CHEBI:15377"/>
        <dbReference type="ChEBI" id="CHEBI:15378"/>
        <dbReference type="ChEBI" id="CHEBI:30616"/>
        <dbReference type="ChEBI" id="CHEBI:43474"/>
        <dbReference type="ChEBI" id="CHEBI:456216"/>
        <dbReference type="EC" id="3.6.4.12"/>
    </reaction>
</comment>
<comment type="catalytic activity">
    <molecule>Helicase nsp10</molecule>
    <reaction evidence="5">
        <text>ATP + H2O = ADP + phosphate + H(+)</text>
        <dbReference type="Rhea" id="RHEA:13065"/>
        <dbReference type="ChEBI" id="CHEBI:15377"/>
        <dbReference type="ChEBI" id="CHEBI:15378"/>
        <dbReference type="ChEBI" id="CHEBI:30616"/>
        <dbReference type="ChEBI" id="CHEBI:43474"/>
        <dbReference type="ChEBI" id="CHEBI:456216"/>
        <dbReference type="EC" id="3.6.4.13"/>
    </reaction>
</comment>
<comment type="catalytic activity">
    <molecule>Nsp2 cysteine proteinase</molecule>
    <reaction evidence="5">
        <text>Thiol-dependent hydrolysis of ester, thioester, amide, peptide and isopeptide bonds formed by the C-terminal Gly of ubiquitin (a 76-residue protein attached to proteins as an intracellular targeting signal).</text>
        <dbReference type="EC" id="3.4.19.12"/>
    </reaction>
</comment>
<comment type="catalytic activity">
    <molecule>Uridylate-specific endoribonuclease nsp11</molecule>
    <reaction evidence="4">
        <text>uridylyl-uridylyl-ribonucleotide-RNA = a 3'-end uridylyl-2',3'-cyclophospho-uridine-RNA + a 5'-end dephospho-ribonucleoside-RNA</text>
        <dbReference type="Rhea" id="RHEA:67732"/>
        <dbReference type="Rhea" id="RHEA-COMP:13936"/>
        <dbReference type="Rhea" id="RHEA-COMP:17334"/>
        <dbReference type="Rhea" id="RHEA-COMP:17335"/>
        <dbReference type="ChEBI" id="CHEBI:138284"/>
        <dbReference type="ChEBI" id="CHEBI:173079"/>
        <dbReference type="ChEBI" id="CHEBI:173080"/>
    </reaction>
</comment>
<comment type="subunit">
    <text evidence="5">Nsp1-alpha papain-like: Interacts with host RNF31.</text>
</comment>
<comment type="subunit">
    <molecule>Nsp1-beta papain-like cysteine proteinase</molecule>
    <text evidence="2">Interacts with host EIF2AK2; this interaction occurs in host stress granules and leads to EIF2AK2 inhibition. Interacts with host G3BP1; this interaction probably plays a role in Nsp1-beta-mediated inhibition of host EIF2AK2.</text>
</comment>
<comment type="subunit">
    <molecule>Nsp2 cysteine proteinase</molecule>
    <text evidence="5">Interacts with host DDX18; this interaction redistributes host DDX18 to the cytoplasm.</text>
</comment>
<comment type="subunit">
    <molecule>Non-structural protein 3</molecule>
    <text evidence="5">Interacts with host IFITM1.</text>
</comment>
<comment type="subunit">
    <molecule>RNA-directed RNA polymerase</molecule>
    <text evidence="5">Interacts with host DDX5.</text>
</comment>
<comment type="subunit">
    <molecule>Helicase nsp10</molecule>
    <text evidence="5">Interacts with host DDX18; this interaction redistributes host DDX18 to the cytoplasm.</text>
</comment>
<comment type="subunit">
    <molecule>Uridylate-specific endoribonuclease nsp11</molecule>
    <text evidence="5">Interacts with host OTULIN.</text>
</comment>
<comment type="subunit">
    <molecule>Non-structural protein 12</molecule>
    <text evidence="5">Interacts with host LGALS3.</text>
</comment>
<comment type="subcellular location">
    <molecule>Nsp1</molecule>
    <subcellularLocation>
        <location evidence="5">Host nucleus</location>
    </subcellularLocation>
    <subcellularLocation>
        <location evidence="5">Host cytoplasm</location>
    </subcellularLocation>
</comment>
<comment type="subcellular location">
    <molecule>Nsp1-alpha papain-like cysteine proteinase</molecule>
    <subcellularLocation>
        <location evidence="5">Host nucleus</location>
    </subcellularLocation>
    <subcellularLocation>
        <location evidence="5">Host cytoplasm</location>
    </subcellularLocation>
</comment>
<comment type="subcellular location">
    <molecule>Nsp1-beta papain-like cysteine proteinase</molecule>
    <subcellularLocation>
        <location evidence="2">Host nucleus</location>
    </subcellularLocation>
    <subcellularLocation>
        <location evidence="2">Host cytoplasm</location>
    </subcellularLocation>
    <text evidence="2">Accumulates mainly in the host cytoplasm in early infection and then mostly in the host nucleus.</text>
</comment>
<comment type="subcellular location">
    <molecule>Nsp2 cysteine proteinase</molecule>
    <subcellularLocation>
        <location evidence="21">Host cytoplasm</location>
    </subcellularLocation>
    <subcellularLocation>
        <location evidence="5">Host membrane</location>
        <topology evidence="5">Multi-pass membrane protein</topology>
    </subcellularLocation>
</comment>
<comment type="subcellular location">
    <molecule>Non-structural protein 5-6-7</molecule>
    <subcellularLocation>
        <location evidence="5">Host endoplasmic reticulum</location>
    </subcellularLocation>
    <subcellularLocation>
        <location evidence="5">Host membrane</location>
        <topology evidence="5">Multi-pass membrane protein</topology>
    </subcellularLocation>
</comment>
<comment type="subcellular location">
    <molecule>Serine protease nsp4</molecule>
    <subcellularLocation>
        <location evidence="5">Host cytoplasm</location>
    </subcellularLocation>
</comment>
<comment type="subcellular location">
    <molecule>RNA-directed RNA polymerase</molecule>
    <subcellularLocation>
        <location evidence="5">Host cytoplasm</location>
    </subcellularLocation>
    <subcellularLocation>
        <location evidence="5">Host cytoplasm</location>
        <location evidence="5">Host perinuclear region</location>
    </subcellularLocation>
</comment>
<comment type="subcellular location">
    <molecule>Helicase nsp10</molecule>
    <subcellularLocation>
        <location evidence="5">Host cytoplasm</location>
    </subcellularLocation>
    <subcellularLocation>
        <location evidence="5">Host cytoplasm</location>
        <location evidence="5">Host perinuclear region</location>
    </subcellularLocation>
</comment>
<comment type="subcellular location">
    <molecule>Uridylate-specific endoribonuclease nsp11</molecule>
    <subcellularLocation>
        <location evidence="5">Host cytoplasm</location>
    </subcellularLocation>
    <subcellularLocation>
        <location evidence="5">Host nucleus</location>
    </subcellularLocation>
</comment>
<comment type="subcellular location">
    <molecule>Non-structural protein 12</molecule>
    <subcellularLocation>
        <location evidence="5">Host cytoplasm</location>
    </subcellularLocation>
</comment>
<comment type="alternative products">
    <event type="ribosomal frameshifting"/>
    <isoform>
        <id>A0MD28-1</id>
        <name>Replicase polyprotein 1ab</name>
        <name>pp1ab</name>
        <sequence type="displayed"/>
    </isoform>
    <isoform>
        <id>A0MD28-2</id>
        <name>Replicase polyprotein 1a</name>
        <name>pp1a</name>
        <name>ORF1a polyprotein</name>
        <sequence type="described" ref="VSP_039634"/>
    </isoform>
    <isoform>
        <id>P0DJY0-1</id>
        <name>Truncated polyprotein 1aTF</name>
        <sequence type="external"/>
    </isoform>
</comment>
<comment type="domain">
    <text evidence="1">The hydrophobic domains (HD) could mediate the membrane association of the replication complex and thereby alter the architecture of the host cell membrane.</text>
</comment>
<comment type="domain">
    <text evidence="1">The OTU-like region is responsible for the deubiquitinating and deISGylation activities of Nsp2.</text>
</comment>
<comment type="PTM">
    <molecule>Replicase polyprotein 1ab</molecule>
    <text evidence="20">Specific enzymatic cleavages in vivo by its own proteases yield mature proteins. Nsp1 is autocleaved into two subunits, Nsp1-alpha and Nsp1-beta. There are two alternative pathways for processing. Either nsp4-5 is cleaved, which represents the major pathway or the nsp5-6 and nsp6-7 are processed, which represents the minor pathway. The major pathway occurs when nsp2 acts as a cofactor for nsp4.</text>
</comment>
<comment type="miscellaneous">
    <molecule>Isoform Replicase polyprotein 1ab</molecule>
    <text>Produced by -1 ribosomal frameshifting at the 1a-1b genes boundary.</text>
</comment>
<comment type="miscellaneous">
    <molecule>Isoform Replicase polyprotein 1a</molecule>
    <text evidence="23">Produced by conventional translation.</text>
</comment>
<comment type="similarity">
    <text evidence="23">Belongs to the arteriviridae polyprotein family.</text>
</comment>
<comment type="sequence caution" evidence="23">
    <conflict type="erroneous initiation">
        <sequence resource="EMBL-CDS" id="AAR37017"/>
    </conflict>
    <text>Extended N-terminus.</text>
</comment>
<evidence type="ECO:0000250" key="1"/>
<evidence type="ECO:0000250" key="2">
    <source>
        <dbReference type="UniProtKB" id="A6YQT5"/>
    </source>
</evidence>
<evidence type="ECO:0000250" key="3">
    <source>
        <dbReference type="UniProtKB" id="P0C6X7"/>
    </source>
</evidence>
<evidence type="ECO:0000250" key="4">
    <source>
        <dbReference type="UniProtKB" id="P19811"/>
    </source>
</evidence>
<evidence type="ECO:0000250" key="5">
    <source>
        <dbReference type="UniProtKB" id="Q04561"/>
    </source>
</evidence>
<evidence type="ECO:0000250" key="6">
    <source>
        <dbReference type="UniProtKB" id="Q9WJB2"/>
    </source>
</evidence>
<evidence type="ECO:0000255" key="7"/>
<evidence type="ECO:0000255" key="8">
    <source>
        <dbReference type="PROSITE-ProRule" id="PRU00539"/>
    </source>
</evidence>
<evidence type="ECO:0000255" key="9">
    <source>
        <dbReference type="PROSITE-ProRule" id="PRU00826"/>
    </source>
</evidence>
<evidence type="ECO:0000255" key="10">
    <source>
        <dbReference type="PROSITE-ProRule" id="PRU00871"/>
    </source>
</evidence>
<evidence type="ECO:0000255" key="11">
    <source>
        <dbReference type="PROSITE-ProRule" id="PRU00872"/>
    </source>
</evidence>
<evidence type="ECO:0000255" key="12">
    <source>
        <dbReference type="PROSITE-ProRule" id="PRU00873"/>
    </source>
</evidence>
<evidence type="ECO:0000255" key="13">
    <source>
        <dbReference type="PROSITE-ProRule" id="PRU00985"/>
    </source>
</evidence>
<evidence type="ECO:0000255" key="14">
    <source>
        <dbReference type="PROSITE-ProRule" id="PRU01292"/>
    </source>
</evidence>
<evidence type="ECO:0000255" key="15">
    <source>
        <dbReference type="PROSITE-ProRule" id="PRU01303"/>
    </source>
</evidence>
<evidence type="ECO:0000255" key="16">
    <source>
        <dbReference type="PROSITE-ProRule" id="PRU01306"/>
    </source>
</evidence>
<evidence type="ECO:0000256" key="17">
    <source>
        <dbReference type="SAM" id="MobiDB-lite"/>
    </source>
</evidence>
<evidence type="ECO:0000269" key="18">
    <source>
    </source>
</evidence>
<evidence type="ECO:0000269" key="19">
    <source>
    </source>
</evidence>
<evidence type="ECO:0000269" key="20">
    <source>
    </source>
</evidence>
<evidence type="ECO:0000269" key="21">
    <source>
    </source>
</evidence>
<evidence type="ECO:0000303" key="22">
    <source>
    </source>
</evidence>
<evidence type="ECO:0000305" key="23"/>
<organism>
    <name type="scientific">Porcine reproductive and respiratory syndrome virus (isolate Pig/United States/SD 01-08/2001)</name>
    <name type="common">PRRSV</name>
    <dbReference type="NCBI Taxonomy" id="857306"/>
    <lineage>
        <taxon>Viruses</taxon>
        <taxon>Riboviria</taxon>
        <taxon>Orthornavirae</taxon>
        <taxon>Pisuviricota</taxon>
        <taxon>Pisoniviricetes</taxon>
        <taxon>Nidovirales</taxon>
        <taxon>Arnidovirineae</taxon>
        <taxon>Arteriviridae</taxon>
        <taxon>Variarterivirinae</taxon>
        <taxon>Betaarterivirus</taxon>
        <taxon>Ampobartevirus</taxon>
        <taxon>Betaarterivirus americense</taxon>
    </lineage>
</organism>
<dbReference type="EC" id="3.4.22.-"/>
<dbReference type="EC" id="3.4.19.12"/>
<dbReference type="EC" id="3.4.21.-"/>
<dbReference type="EC" id="2.7.7.48"/>
<dbReference type="EC" id="3.6.4.12"/>
<dbReference type="EC" id="3.6.4.13"/>
<dbReference type="EC" id="4.6.1.-"/>
<dbReference type="EMBL" id="AY375474">
    <property type="protein sequence ID" value="AAR37016.1"/>
    <property type="molecule type" value="Genomic_RNA"/>
</dbReference>
<dbReference type="EMBL" id="AY375474">
    <property type="protein sequence ID" value="AAR37017.1"/>
    <property type="status" value="ALT_INIT"/>
    <property type="molecule type" value="Genomic_RNA"/>
</dbReference>
<dbReference type="EMBL" id="DQ489311">
    <property type="protein sequence ID" value="ABF66340.1"/>
    <property type="molecule type" value="Genomic_RNA"/>
</dbReference>
<dbReference type="EMBL" id="DQ489311">
    <property type="protein sequence ID" value="ABF66341.1"/>
    <property type="molecule type" value="Genomic_RNA"/>
</dbReference>
<dbReference type="SMR" id="A0MD28"/>
<dbReference type="MEROPS" id="S32.002"/>
<dbReference type="Proteomes" id="UP000000937">
    <property type="component" value="Genome"/>
</dbReference>
<dbReference type="GO" id="GO:0044165">
    <property type="term" value="C:host cell endoplasmic reticulum"/>
    <property type="evidence" value="ECO:0007669"/>
    <property type="project" value="UniProtKB-SubCell"/>
</dbReference>
<dbReference type="GO" id="GO:0033644">
    <property type="term" value="C:host cell membrane"/>
    <property type="evidence" value="ECO:0007669"/>
    <property type="project" value="UniProtKB-SubCell"/>
</dbReference>
<dbReference type="GO" id="GO:0042025">
    <property type="term" value="C:host cell nucleus"/>
    <property type="evidence" value="ECO:0007669"/>
    <property type="project" value="UniProtKB-SubCell"/>
</dbReference>
<dbReference type="GO" id="GO:0044220">
    <property type="term" value="C:host cell perinuclear region of cytoplasm"/>
    <property type="evidence" value="ECO:0007669"/>
    <property type="project" value="UniProtKB-SubCell"/>
</dbReference>
<dbReference type="GO" id="GO:0016020">
    <property type="term" value="C:membrane"/>
    <property type="evidence" value="ECO:0007669"/>
    <property type="project" value="UniProtKB-KW"/>
</dbReference>
<dbReference type="GO" id="GO:0005524">
    <property type="term" value="F:ATP binding"/>
    <property type="evidence" value="ECO:0007669"/>
    <property type="project" value="UniProtKB-KW"/>
</dbReference>
<dbReference type="GO" id="GO:0016887">
    <property type="term" value="F:ATP hydrolysis activity"/>
    <property type="evidence" value="ECO:0007669"/>
    <property type="project" value="RHEA"/>
</dbReference>
<dbReference type="GO" id="GO:0004843">
    <property type="term" value="F:cysteine-type deubiquitinase activity"/>
    <property type="evidence" value="ECO:0007669"/>
    <property type="project" value="UniProtKB-EC"/>
</dbReference>
<dbReference type="GO" id="GO:0004197">
    <property type="term" value="F:cysteine-type endopeptidase activity"/>
    <property type="evidence" value="ECO:0007669"/>
    <property type="project" value="InterPro"/>
</dbReference>
<dbReference type="GO" id="GO:0004519">
    <property type="term" value="F:endonuclease activity"/>
    <property type="evidence" value="ECO:0007669"/>
    <property type="project" value="UniProtKB-KW"/>
</dbReference>
<dbReference type="GO" id="GO:0016829">
    <property type="term" value="F:lyase activity"/>
    <property type="evidence" value="ECO:0007669"/>
    <property type="project" value="UniProtKB-KW"/>
</dbReference>
<dbReference type="GO" id="GO:0030291">
    <property type="term" value="F:protein serine/threonine kinase inhibitor activity"/>
    <property type="evidence" value="ECO:0007669"/>
    <property type="project" value="UniProtKB-KW"/>
</dbReference>
<dbReference type="GO" id="GO:0003723">
    <property type="term" value="F:RNA binding"/>
    <property type="evidence" value="ECO:0007669"/>
    <property type="project" value="InterPro"/>
</dbReference>
<dbReference type="GO" id="GO:0003724">
    <property type="term" value="F:RNA helicase activity"/>
    <property type="evidence" value="ECO:0007669"/>
    <property type="project" value="UniProtKB-EC"/>
</dbReference>
<dbReference type="GO" id="GO:0004540">
    <property type="term" value="F:RNA nuclease activity"/>
    <property type="evidence" value="ECO:0007669"/>
    <property type="project" value="UniProtKB-ARBA"/>
</dbReference>
<dbReference type="GO" id="GO:0003968">
    <property type="term" value="F:RNA-directed RNA polymerase activity"/>
    <property type="evidence" value="ECO:0007669"/>
    <property type="project" value="UniProtKB-KW"/>
</dbReference>
<dbReference type="GO" id="GO:0004252">
    <property type="term" value="F:serine-type endopeptidase activity"/>
    <property type="evidence" value="ECO:0007669"/>
    <property type="project" value="InterPro"/>
</dbReference>
<dbReference type="GO" id="GO:0008270">
    <property type="term" value="F:zinc ion binding"/>
    <property type="evidence" value="ECO:0007669"/>
    <property type="project" value="UniProtKB-KW"/>
</dbReference>
<dbReference type="GO" id="GO:0006351">
    <property type="term" value="P:DNA-templated transcription"/>
    <property type="evidence" value="ECO:0007669"/>
    <property type="project" value="InterPro"/>
</dbReference>
<dbReference type="GO" id="GO:0006508">
    <property type="term" value="P:proteolysis"/>
    <property type="evidence" value="ECO:0007669"/>
    <property type="project" value="UniProtKB-KW"/>
</dbReference>
<dbReference type="GO" id="GO:0039648">
    <property type="term" value="P:symbiont-mediated perturbation of host ubiquitin-like protein modification"/>
    <property type="evidence" value="ECO:0007669"/>
    <property type="project" value="UniProtKB-KW"/>
</dbReference>
<dbReference type="GO" id="GO:0039579">
    <property type="term" value="P:symbiont-mediated suppression of host ISG15-protein conjugation"/>
    <property type="evidence" value="ECO:0007669"/>
    <property type="project" value="UniProtKB-KW"/>
</dbReference>
<dbReference type="GO" id="GO:0039563">
    <property type="term" value="P:symbiont-mediated suppression of host JAK-STAT cascade via inhibition of STAT1 activity"/>
    <property type="evidence" value="ECO:0007669"/>
    <property type="project" value="UniProtKB-KW"/>
</dbReference>
<dbReference type="GO" id="GO:0085034">
    <property type="term" value="P:symbiont-mediated suppression of host NF-kappaB cascade"/>
    <property type="evidence" value="ECO:0007669"/>
    <property type="project" value="UniProtKB-KW"/>
</dbReference>
<dbReference type="GO" id="GO:0039580">
    <property type="term" value="P:symbiont-mediated suppression of host PKR/eIFalpha signaling"/>
    <property type="evidence" value="ECO:0007669"/>
    <property type="project" value="UniProtKB-KW"/>
</dbReference>
<dbReference type="GO" id="GO:0039502">
    <property type="term" value="P:symbiont-mediated suppression of host type I interferon-mediated signaling pathway"/>
    <property type="evidence" value="ECO:0007669"/>
    <property type="project" value="UniProtKB-KW"/>
</dbReference>
<dbReference type="GO" id="GO:0019082">
    <property type="term" value="P:viral protein processing"/>
    <property type="evidence" value="ECO:0007669"/>
    <property type="project" value="InterPro"/>
</dbReference>
<dbReference type="GO" id="GO:0039694">
    <property type="term" value="P:viral RNA genome replication"/>
    <property type="evidence" value="ECO:0007669"/>
    <property type="project" value="InterPro"/>
</dbReference>
<dbReference type="GO" id="GO:0075523">
    <property type="term" value="P:viral translational frameshifting"/>
    <property type="evidence" value="ECO:0007669"/>
    <property type="project" value="UniProtKB-KW"/>
</dbReference>
<dbReference type="CDD" id="cd21410">
    <property type="entry name" value="1B_av_Nsp10-like"/>
    <property type="match status" value="1"/>
</dbReference>
<dbReference type="CDD" id="cd23189">
    <property type="entry name" value="Arteriviridae_RdRp"/>
    <property type="match status" value="1"/>
</dbReference>
<dbReference type="CDD" id="cd22528">
    <property type="entry name" value="av_Nsp3_ER-remodelling"/>
    <property type="match status" value="1"/>
</dbReference>
<dbReference type="CDD" id="cd17937">
    <property type="entry name" value="DEXXYc_viral_SF1-N"/>
    <property type="match status" value="1"/>
</dbReference>
<dbReference type="CDD" id="cd21160">
    <property type="entry name" value="NendoU_av_Nsp11-like"/>
    <property type="match status" value="1"/>
</dbReference>
<dbReference type="CDD" id="cd21166">
    <property type="entry name" value="NTD_av_Nsp11-like"/>
    <property type="match status" value="1"/>
</dbReference>
<dbReference type="CDD" id="cd18786">
    <property type="entry name" value="SF1_C"/>
    <property type="match status" value="1"/>
</dbReference>
<dbReference type="CDD" id="cd21405">
    <property type="entry name" value="ZBD_av_Nsp10-like"/>
    <property type="match status" value="1"/>
</dbReference>
<dbReference type="FunFam" id="3.30.1330.220:FF:000001">
    <property type="entry name" value="ORF1a polyprotein"/>
    <property type="match status" value="1"/>
</dbReference>
<dbReference type="FunFam" id="3.90.70.160:FF:000001">
    <property type="entry name" value="ORF1a polyprotein"/>
    <property type="match status" value="1"/>
</dbReference>
<dbReference type="FunFam" id="3.90.70.60:FF:000001">
    <property type="entry name" value="Polyprotein 1a"/>
    <property type="match status" value="1"/>
</dbReference>
<dbReference type="FunFam" id="2.30.31.30:FF:000001">
    <property type="entry name" value="Replicase polyprotein 1ab"/>
    <property type="match status" value="1"/>
</dbReference>
<dbReference type="Gene3D" id="3.90.70.160">
    <property type="match status" value="1"/>
</dbReference>
<dbReference type="Gene3D" id="4.10.80.390">
    <property type="match status" value="1"/>
</dbReference>
<dbReference type="Gene3D" id="3.30.1330.220">
    <property type="entry name" value="Arterivirus nonstructural protein 7 alpha"/>
    <property type="match status" value="1"/>
</dbReference>
<dbReference type="Gene3D" id="2.30.31.30">
    <property type="entry name" value="Arterivirus nps1beta, nuclease domain"/>
    <property type="match status" value="1"/>
</dbReference>
<dbReference type="Gene3D" id="3.90.70.70">
    <property type="entry name" value="Arterivirus papain-like cysteine protease beta domain"/>
    <property type="match status" value="1"/>
</dbReference>
<dbReference type="Gene3D" id="3.30.40.20">
    <property type="entry name" value="Chymotrypsin-like serine protease, domain 3"/>
    <property type="match status" value="1"/>
</dbReference>
<dbReference type="Gene3D" id="3.40.50.300">
    <property type="entry name" value="P-loop containing nucleotide triphosphate hydrolases"/>
    <property type="match status" value="2"/>
</dbReference>
<dbReference type="Gene3D" id="3.90.70.60">
    <property type="entry name" value="Porcine arterivirus-type cysteine proteinase alpha domain"/>
    <property type="match status" value="1"/>
</dbReference>
<dbReference type="Gene3D" id="2.40.10.10">
    <property type="entry name" value="Trypsin-like serine proteases"/>
    <property type="match status" value="2"/>
</dbReference>
<dbReference type="InterPro" id="IPR027351">
    <property type="entry name" value="(+)RNA_virus_helicase_core_dom"/>
</dbReference>
<dbReference type="InterPro" id="IPR031932">
    <property type="entry name" value="Arteri_nsp7a"/>
</dbReference>
<dbReference type="InterPro" id="IPR038451">
    <property type="entry name" value="Arteri_nsp7a_sf"/>
</dbReference>
<dbReference type="InterPro" id="IPR008743">
    <property type="entry name" value="Arterivirus_Nsp2_C33"/>
</dbReference>
<dbReference type="InterPro" id="IPR023338">
    <property type="entry name" value="Arterivirus_NSP4_peptidase"/>
</dbReference>
<dbReference type="InterPro" id="IPR046440">
    <property type="entry name" value="AV_NSP11N_COV_NSP15M"/>
</dbReference>
<dbReference type="InterPro" id="IPR008741">
    <property type="entry name" value="AV_PCPalpha"/>
</dbReference>
<dbReference type="InterPro" id="IPR038155">
    <property type="entry name" value="AV_PCPalpha_sf"/>
</dbReference>
<dbReference type="InterPro" id="IPR025773">
    <property type="entry name" value="AV_PCPbeta"/>
</dbReference>
<dbReference type="InterPro" id="IPR038154">
    <property type="entry name" value="AV_PCPbeta_sf"/>
</dbReference>
<dbReference type="InterPro" id="IPR023183">
    <property type="entry name" value="Chymotrypsin-like_C"/>
</dbReference>
<dbReference type="InterPro" id="IPR043502">
    <property type="entry name" value="DNA/RNA_pol_sf"/>
</dbReference>
<dbReference type="InterPro" id="IPR008760">
    <property type="entry name" value="EAV_peptidase_S32"/>
</dbReference>
<dbReference type="InterPro" id="IPR037227">
    <property type="entry name" value="EndoU-like"/>
</dbReference>
<dbReference type="InterPro" id="IPR043609">
    <property type="entry name" value="NendoU_nidovirus"/>
</dbReference>
<dbReference type="InterPro" id="IPR044863">
    <property type="entry name" value="NIRAN"/>
</dbReference>
<dbReference type="InterPro" id="IPR044348">
    <property type="entry name" value="NSP10_1B_Av"/>
</dbReference>
<dbReference type="InterPro" id="IPR027355">
    <property type="entry name" value="NSP10_Av_ZBD"/>
</dbReference>
<dbReference type="InterPro" id="IPR044320">
    <property type="entry name" value="NSP11_Av_N"/>
</dbReference>
<dbReference type="InterPro" id="IPR044314">
    <property type="entry name" value="NSP11_NendoU_Av"/>
</dbReference>
<dbReference type="InterPro" id="IPR054104">
    <property type="entry name" value="Nsp1alpha_Znf"/>
</dbReference>
<dbReference type="InterPro" id="IPR032855">
    <property type="entry name" value="NSP2-B_epitope"/>
</dbReference>
<dbReference type="InterPro" id="IPR032841">
    <property type="entry name" value="NSP2_assoc"/>
</dbReference>
<dbReference type="InterPro" id="IPR027417">
    <property type="entry name" value="P-loop_NTPase"/>
</dbReference>
<dbReference type="InterPro" id="IPR009003">
    <property type="entry name" value="Peptidase_S1_PA"/>
</dbReference>
<dbReference type="InterPro" id="IPR043504">
    <property type="entry name" value="Peptidase_S1_PA_chymotrypsin"/>
</dbReference>
<dbReference type="InterPro" id="IPR001205">
    <property type="entry name" value="RNA-dir_pol_C"/>
</dbReference>
<dbReference type="InterPro" id="IPR007094">
    <property type="entry name" value="RNA-dir_pol_PSvirus"/>
</dbReference>
<dbReference type="Pfam" id="PF16749">
    <property type="entry name" value="Arteri_nsp7a"/>
    <property type="match status" value="1"/>
</dbReference>
<dbReference type="Pfam" id="PF14757">
    <property type="entry name" value="NSP2-B_epitope"/>
    <property type="match status" value="1"/>
</dbReference>
<dbReference type="Pfam" id="PF14758">
    <property type="entry name" value="NSP2_assoc"/>
    <property type="match status" value="1"/>
</dbReference>
<dbReference type="Pfam" id="PF05410">
    <property type="entry name" value="Peptidase_C31"/>
    <property type="match status" value="1"/>
</dbReference>
<dbReference type="Pfam" id="PF05411">
    <property type="entry name" value="Peptidase_C32"/>
    <property type="match status" value="1"/>
</dbReference>
<dbReference type="Pfam" id="PF05412">
    <property type="entry name" value="Peptidase_C33"/>
    <property type="match status" value="1"/>
</dbReference>
<dbReference type="Pfam" id="PF05579">
    <property type="entry name" value="Peptidase_S32"/>
    <property type="match status" value="1"/>
</dbReference>
<dbReference type="Pfam" id="PF22049">
    <property type="entry name" value="PRRSV-NSP11_N"/>
    <property type="match status" value="1"/>
</dbReference>
<dbReference type="Pfam" id="PF00680">
    <property type="entry name" value="RdRP_1"/>
    <property type="match status" value="1"/>
</dbReference>
<dbReference type="Pfam" id="PF01443">
    <property type="entry name" value="Viral_helicase1"/>
    <property type="match status" value="1"/>
</dbReference>
<dbReference type="Pfam" id="PF21905">
    <property type="entry name" value="Zf-Nsp1alpha"/>
    <property type="match status" value="1"/>
</dbReference>
<dbReference type="SUPFAM" id="SSF56672">
    <property type="entry name" value="DNA/RNA polymerases"/>
    <property type="match status" value="1"/>
</dbReference>
<dbReference type="SUPFAM" id="SSF142877">
    <property type="entry name" value="EndoU-like"/>
    <property type="match status" value="1"/>
</dbReference>
<dbReference type="SUPFAM" id="SSF52540">
    <property type="entry name" value="P-loop containing nucleoside triphosphate hydrolases"/>
    <property type="match status" value="1"/>
</dbReference>
<dbReference type="SUPFAM" id="SSF50494">
    <property type="entry name" value="Trypsin-like serine proteases"/>
    <property type="match status" value="1"/>
</dbReference>
<dbReference type="PROSITE" id="PS51538">
    <property type="entry name" value="AV_CP"/>
    <property type="match status" value="1"/>
</dbReference>
<dbReference type="PROSITE" id="PS51961">
    <property type="entry name" value="AV_NSP11N_COV_NSP15M"/>
    <property type="match status" value="1"/>
</dbReference>
<dbReference type="PROSITE" id="PS51493">
    <property type="entry name" value="AV_NSP4_PRO"/>
    <property type="match status" value="1"/>
</dbReference>
<dbReference type="PROSITE" id="PS51539">
    <property type="entry name" value="AV_PCP_ALPHA"/>
    <property type="match status" value="1"/>
</dbReference>
<dbReference type="PROSITE" id="PS51540">
    <property type="entry name" value="AV_PCP_BETA"/>
    <property type="match status" value="1"/>
</dbReference>
<dbReference type="PROSITE" id="PS51652">
    <property type="entry name" value="AV_ZBD"/>
    <property type="match status" value="1"/>
</dbReference>
<dbReference type="PROSITE" id="PS51958">
    <property type="entry name" value="NENDOU"/>
    <property type="match status" value="1"/>
</dbReference>
<dbReference type="PROSITE" id="PS51947">
    <property type="entry name" value="NIRAN"/>
    <property type="match status" value="1"/>
</dbReference>
<dbReference type="PROSITE" id="PS51657">
    <property type="entry name" value="PSRV_HELICASE"/>
    <property type="match status" value="1"/>
</dbReference>
<dbReference type="PROSITE" id="PS50507">
    <property type="entry name" value="RDRP_SSRNA_POS"/>
    <property type="match status" value="1"/>
</dbReference>
<reference key="1">
    <citation type="journal article" date="2004" name="Virus Res.">
        <title>Heterogeneity in Nsp2 of European-like porcine reproductive and respiratory syndrome viruses isolated in the United States.</title>
        <authorList>
            <person name="Fang Y."/>
            <person name="Kim D.Y."/>
            <person name="Ropp S."/>
            <person name="Steen P."/>
            <person name="Christopher-Hennings J."/>
            <person name="Nelson E.A."/>
            <person name="Rowland R.R."/>
        </authorList>
    </citation>
    <scope>NUCLEOTIDE SEQUENCE [GENOMIC RNA]</scope>
</reference>
<reference key="2">
    <citation type="journal article" date="2006" name="J. Virol.">
        <title>A full-length cDNA infectious clone of North American type 1 porcine reproductive and respiratory syndrome virus: expression of green fluorescent protein in the Nsp2 region.</title>
        <authorList>
            <person name="Fang Y."/>
            <person name="Rowland R.R."/>
            <person name="Roof M."/>
            <person name="Lunney J.K."/>
            <person name="Christopher-Hennings J."/>
            <person name="Nelson E.A."/>
        </authorList>
    </citation>
    <scope>NUCLEOTIDE SEQUENCE [GENOMIC RNA]</scope>
    <source>
        <strain>Infectious clone SD 01-08</strain>
    </source>
</reference>
<reference key="3">
    <citation type="journal article" date="2010" name="J. Virol.">
        <title>The cysteine protease domain of porcine reproductive and respiratory syndrome virus nonstructural protein 2 possesses deubiquitinating and interferon antagonism functions.</title>
        <authorList>
            <person name="Sun Z."/>
            <person name="Chen Z."/>
            <person name="Lawson S.R."/>
            <person name="Fang Y."/>
        </authorList>
    </citation>
    <scope>FUNCTION (NSP2 CYSTEINE PROTEINASE)</scope>
    <scope>MUTAGENESIS OF CYS-429; ASP-458; SER-462; ASP-463; ASP-465 AND HIS-498</scope>
</reference>
<reference key="4">
    <citation type="journal article" date="2012" name="J. Gen. Virol.">
        <title>Identification of porcine reproductive and respiratory syndrome virus ORF1a-encoded non-structural proteins in virus-infected cells.</title>
        <authorList>
            <person name="Li Y."/>
            <person name="Tas A."/>
            <person name="Snijder E.J."/>
            <person name="Fang Y."/>
        </authorList>
    </citation>
    <scope>PROTEOLYTIC PROCESSING (REPLICASE POLYPROTEIN 1AB)</scope>
</reference>
<reference key="5">
    <citation type="journal article" date="2012" name="Proc. Natl. Acad. Sci. U.S.A.">
        <title>Efficient -2 frameshifting by mammalian ribosomes to synthesize an additional arterivirus protein.</title>
        <authorList>
            <person name="Fang Y."/>
            <person name="Treffers E.E."/>
            <person name="Li Y."/>
            <person name="Tas A."/>
            <person name="Sun Z."/>
            <person name="van der Meer Y."/>
            <person name="de Ru A.H."/>
            <person name="van Veelen P.A."/>
            <person name="Atkins J.F."/>
            <person name="Snijder E.J."/>
            <person name="Firth A.E."/>
        </authorList>
    </citation>
    <scope>SUBCELLULAR LOCATION (NSP2 CYSTEINE PROTEINASE)</scope>
</reference>
<reference key="6">
    <citation type="journal article" date="2012" name="J. Virol.">
        <title>Nonstructural protein 2 of porcine reproductive and respiratory syndrome virus inhibits the antiviral function of interferon-stimulated gene 15.</title>
        <authorList>
            <person name="Sun Z."/>
            <person name="Li Y."/>
            <person name="Ransburgh R."/>
            <person name="Snijder E.J."/>
            <person name="Fang Y."/>
        </authorList>
    </citation>
    <scope>FUNCTION (NSP2 CYSTEINE PROTEINASE)</scope>
</reference>